<protein>
    <recommendedName>
        <fullName evidence="1">Photosystem I P700 chlorophyll a apoprotein A2</fullName>
        <ecNumber evidence="1">1.97.1.12</ecNumber>
    </recommendedName>
    <alternativeName>
        <fullName evidence="1">PsaB</fullName>
    </alternativeName>
</protein>
<accession>Q7U4E5</accession>
<proteinExistence type="inferred from homology"/>
<evidence type="ECO:0000255" key="1">
    <source>
        <dbReference type="HAMAP-Rule" id="MF_00482"/>
    </source>
</evidence>
<keyword id="KW-0004">4Fe-4S</keyword>
<keyword id="KW-0148">Chlorophyll</keyword>
<keyword id="KW-0157">Chromophore</keyword>
<keyword id="KW-0249">Electron transport</keyword>
<keyword id="KW-0408">Iron</keyword>
<keyword id="KW-0411">Iron-sulfur</keyword>
<keyword id="KW-0460">Magnesium</keyword>
<keyword id="KW-0472">Membrane</keyword>
<keyword id="KW-0479">Metal-binding</keyword>
<keyword id="KW-0560">Oxidoreductase</keyword>
<keyword id="KW-0602">Photosynthesis</keyword>
<keyword id="KW-0603">Photosystem I</keyword>
<keyword id="KW-0793">Thylakoid</keyword>
<keyword id="KW-0812">Transmembrane</keyword>
<keyword id="KW-1133">Transmembrane helix</keyword>
<keyword id="KW-0813">Transport</keyword>
<feature type="chain" id="PRO_0000088653" description="Photosystem I P700 chlorophyll a apoprotein A2">
    <location>
        <begin position="1"/>
        <end position="737"/>
    </location>
</feature>
<feature type="transmembrane region" description="Helical; Name=I" evidence="1">
    <location>
        <begin position="46"/>
        <end position="69"/>
    </location>
</feature>
<feature type="transmembrane region" description="Helical; Name=II" evidence="1">
    <location>
        <begin position="135"/>
        <end position="158"/>
    </location>
</feature>
<feature type="transmembrane region" description="Helical; Name=III" evidence="1">
    <location>
        <begin position="175"/>
        <end position="199"/>
    </location>
</feature>
<feature type="transmembrane region" description="Helical; Name=IV" evidence="1">
    <location>
        <begin position="273"/>
        <end position="291"/>
    </location>
</feature>
<feature type="transmembrane region" description="Helical; Name=V" evidence="1">
    <location>
        <begin position="333"/>
        <end position="356"/>
    </location>
</feature>
<feature type="transmembrane region" description="Helical; Name=VI" evidence="1">
    <location>
        <begin position="372"/>
        <end position="398"/>
    </location>
</feature>
<feature type="transmembrane region" description="Helical; Name=VII" evidence="1">
    <location>
        <begin position="420"/>
        <end position="442"/>
    </location>
</feature>
<feature type="transmembrane region" description="Helical; Name=VIII" evidence="1">
    <location>
        <begin position="520"/>
        <end position="538"/>
    </location>
</feature>
<feature type="transmembrane region" description="Helical; Name=IX" evidence="1">
    <location>
        <begin position="578"/>
        <end position="599"/>
    </location>
</feature>
<feature type="transmembrane region" description="Helical; Name=X" evidence="1">
    <location>
        <begin position="646"/>
        <end position="668"/>
    </location>
</feature>
<feature type="transmembrane region" description="Helical; Name=XI" evidence="1">
    <location>
        <begin position="710"/>
        <end position="730"/>
    </location>
</feature>
<feature type="binding site" evidence="1">
    <location>
        <position position="562"/>
    </location>
    <ligand>
        <name>[4Fe-4S] cluster</name>
        <dbReference type="ChEBI" id="CHEBI:49883"/>
        <note>ligand shared between dimeric partners</note>
    </ligand>
</feature>
<feature type="binding site" evidence="1">
    <location>
        <position position="571"/>
    </location>
    <ligand>
        <name>[4Fe-4S] cluster</name>
        <dbReference type="ChEBI" id="CHEBI:49883"/>
        <note>ligand shared between dimeric partners</note>
    </ligand>
</feature>
<feature type="binding site" description="axial binding residue" evidence="1">
    <location>
        <position position="657"/>
    </location>
    <ligand>
        <name>chlorophyll a</name>
        <dbReference type="ChEBI" id="CHEBI:58416"/>
        <label>B1</label>
    </ligand>
    <ligandPart>
        <name>Mg</name>
        <dbReference type="ChEBI" id="CHEBI:25107"/>
    </ligandPart>
</feature>
<feature type="binding site" description="axial binding residue" evidence="1">
    <location>
        <position position="665"/>
    </location>
    <ligand>
        <name>chlorophyll a</name>
        <dbReference type="ChEBI" id="CHEBI:58416"/>
        <label>B3</label>
    </ligand>
    <ligandPart>
        <name>Mg</name>
        <dbReference type="ChEBI" id="CHEBI:25107"/>
    </ligandPart>
</feature>
<feature type="binding site" evidence="1">
    <location>
        <position position="673"/>
    </location>
    <ligand>
        <name>chlorophyll a</name>
        <dbReference type="ChEBI" id="CHEBI:58416"/>
        <label>B3</label>
    </ligand>
</feature>
<feature type="binding site" evidence="1">
    <location>
        <position position="674"/>
    </location>
    <ligand>
        <name>phylloquinone</name>
        <dbReference type="ChEBI" id="CHEBI:18067"/>
        <label>B</label>
    </ligand>
</feature>
<reference key="1">
    <citation type="journal article" date="2003" name="Nature">
        <title>The genome of a motile marine Synechococcus.</title>
        <authorList>
            <person name="Palenik B."/>
            <person name="Brahamsha B."/>
            <person name="Larimer F.W."/>
            <person name="Land M.L."/>
            <person name="Hauser L."/>
            <person name="Chain P."/>
            <person name="Lamerdin J.E."/>
            <person name="Regala W."/>
            <person name="Allen E.E."/>
            <person name="McCarren J."/>
            <person name="Paulsen I.T."/>
            <person name="Dufresne A."/>
            <person name="Partensky F."/>
            <person name="Webb E.A."/>
            <person name="Waterbury J."/>
        </authorList>
    </citation>
    <scope>NUCLEOTIDE SEQUENCE [LARGE SCALE GENOMIC DNA]</scope>
    <source>
        <strain>WH8102</strain>
    </source>
</reference>
<comment type="function">
    <text evidence="1">PsaA and PsaB bind P700, the primary electron donor of photosystem I (PSI), as well as the electron acceptors A0, A1 and FX. PSI is a plastocyanin/cytochrome c6-ferredoxin oxidoreductase, converting photonic excitation into a charge separation, which transfers an electron from the donor P700 chlorophyll pair to the spectroscopically characterized acceptors A0, A1, FX, FA and FB in turn. Oxidized P700 is reduced on the lumenal side of the thylakoid membrane by plastocyanin or cytochrome c6.</text>
</comment>
<comment type="catalytic activity">
    <reaction evidence="1">
        <text>reduced [plastocyanin] + hnu + oxidized [2Fe-2S]-[ferredoxin] = oxidized [plastocyanin] + reduced [2Fe-2S]-[ferredoxin]</text>
        <dbReference type="Rhea" id="RHEA:30407"/>
        <dbReference type="Rhea" id="RHEA-COMP:10000"/>
        <dbReference type="Rhea" id="RHEA-COMP:10001"/>
        <dbReference type="Rhea" id="RHEA-COMP:10039"/>
        <dbReference type="Rhea" id="RHEA-COMP:10040"/>
        <dbReference type="ChEBI" id="CHEBI:29036"/>
        <dbReference type="ChEBI" id="CHEBI:30212"/>
        <dbReference type="ChEBI" id="CHEBI:33737"/>
        <dbReference type="ChEBI" id="CHEBI:33738"/>
        <dbReference type="ChEBI" id="CHEBI:49552"/>
        <dbReference type="EC" id="1.97.1.12"/>
    </reaction>
</comment>
<comment type="cofactor">
    <text evidence="1">PSI electron transfer chain: 5 chlorophyll a, 1 chlorophyll a', 2 phylloquinones and 3 4Fe-4S clusters. PSI core antenna: 90 chlorophyll a, 22 carotenoids, 3 phospholipids and 1 galactolipid. P700 is a chlorophyll a/chlorophyll a' dimer, A0 is one or more chlorophyll a, A1 is one or both phylloquinones and FX is a shared 4Fe-4S iron-sulfur center.</text>
</comment>
<comment type="subunit">
    <text evidence="1">The PsaA/B heterodimer binds the P700 chlorophyll special pair and subsequent electron acceptors. PSI consists of a core antenna complex that captures photons, and an electron transfer chain that converts photonic excitation into a charge separation. The cyanobacterial PSI reaction center is composed of one copy each of PsaA,B,C,D,E,F,I,J,K,L,M and X, and forms trimeric complexes.</text>
</comment>
<comment type="subcellular location">
    <subcellularLocation>
        <location evidence="1">Cellular thylakoid membrane</location>
        <topology evidence="1">Multi-pass membrane protein</topology>
    </subcellularLocation>
</comment>
<comment type="similarity">
    <text evidence="1">Belongs to the PsaA/PsaB family.</text>
</comment>
<dbReference type="EC" id="1.97.1.12" evidence="1"/>
<dbReference type="EMBL" id="BX569694">
    <property type="protein sequence ID" value="CAE08638.1"/>
    <property type="molecule type" value="Genomic_DNA"/>
</dbReference>
<dbReference type="RefSeq" id="WP_011128979.1">
    <property type="nucleotide sequence ID" value="NC_005070.1"/>
</dbReference>
<dbReference type="SMR" id="Q7U4E5"/>
<dbReference type="STRING" id="84588.SYNW2123"/>
<dbReference type="KEGG" id="syw:SYNW2123"/>
<dbReference type="eggNOG" id="COG2885">
    <property type="taxonomic scope" value="Bacteria"/>
</dbReference>
<dbReference type="HOGENOM" id="CLU_016126_1_0_3"/>
<dbReference type="Proteomes" id="UP000001422">
    <property type="component" value="Chromosome"/>
</dbReference>
<dbReference type="GO" id="GO:0009522">
    <property type="term" value="C:photosystem I"/>
    <property type="evidence" value="ECO:0007669"/>
    <property type="project" value="UniProtKB-KW"/>
</dbReference>
<dbReference type="GO" id="GO:0031676">
    <property type="term" value="C:plasma membrane-derived thylakoid membrane"/>
    <property type="evidence" value="ECO:0007669"/>
    <property type="project" value="UniProtKB-SubCell"/>
</dbReference>
<dbReference type="GO" id="GO:0051539">
    <property type="term" value="F:4 iron, 4 sulfur cluster binding"/>
    <property type="evidence" value="ECO:0007669"/>
    <property type="project" value="UniProtKB-KW"/>
</dbReference>
<dbReference type="GO" id="GO:0016168">
    <property type="term" value="F:chlorophyll binding"/>
    <property type="evidence" value="ECO:0007669"/>
    <property type="project" value="UniProtKB-KW"/>
</dbReference>
<dbReference type="GO" id="GO:0009055">
    <property type="term" value="F:electron transfer activity"/>
    <property type="evidence" value="ECO:0007669"/>
    <property type="project" value="UniProtKB-UniRule"/>
</dbReference>
<dbReference type="GO" id="GO:0000287">
    <property type="term" value="F:magnesium ion binding"/>
    <property type="evidence" value="ECO:0007669"/>
    <property type="project" value="UniProtKB-UniRule"/>
</dbReference>
<dbReference type="GO" id="GO:0016491">
    <property type="term" value="F:oxidoreductase activity"/>
    <property type="evidence" value="ECO:0007669"/>
    <property type="project" value="UniProtKB-KW"/>
</dbReference>
<dbReference type="GO" id="GO:0015979">
    <property type="term" value="P:photosynthesis"/>
    <property type="evidence" value="ECO:0007669"/>
    <property type="project" value="UniProtKB-UniRule"/>
</dbReference>
<dbReference type="FunFam" id="1.20.1130.10:FF:000001">
    <property type="entry name" value="Photosystem I P700 chlorophyll a apoprotein A2"/>
    <property type="match status" value="1"/>
</dbReference>
<dbReference type="Gene3D" id="1.20.1130.10">
    <property type="entry name" value="Photosystem I PsaA/PsaB"/>
    <property type="match status" value="1"/>
</dbReference>
<dbReference type="HAMAP" id="MF_00482">
    <property type="entry name" value="PSI_PsaB"/>
    <property type="match status" value="1"/>
</dbReference>
<dbReference type="InterPro" id="IPR001280">
    <property type="entry name" value="PSI_PsaA/B"/>
</dbReference>
<dbReference type="InterPro" id="IPR020586">
    <property type="entry name" value="PSI_PsaA/B_CS"/>
</dbReference>
<dbReference type="InterPro" id="IPR036408">
    <property type="entry name" value="PSI_PsaA/B_sf"/>
</dbReference>
<dbReference type="InterPro" id="IPR006244">
    <property type="entry name" value="PSI_PsaB"/>
</dbReference>
<dbReference type="NCBIfam" id="TIGR01336">
    <property type="entry name" value="psaB"/>
    <property type="match status" value="1"/>
</dbReference>
<dbReference type="PANTHER" id="PTHR30128">
    <property type="entry name" value="OUTER MEMBRANE PROTEIN, OMPA-RELATED"/>
    <property type="match status" value="1"/>
</dbReference>
<dbReference type="PANTHER" id="PTHR30128:SF19">
    <property type="entry name" value="PHOTOSYSTEM I P700 CHLOROPHYLL A APOPROTEIN A1-RELATED"/>
    <property type="match status" value="1"/>
</dbReference>
<dbReference type="Pfam" id="PF00223">
    <property type="entry name" value="PsaA_PsaB"/>
    <property type="match status" value="1"/>
</dbReference>
<dbReference type="PIRSF" id="PIRSF002905">
    <property type="entry name" value="PSI_A"/>
    <property type="match status" value="1"/>
</dbReference>
<dbReference type="PRINTS" id="PR00257">
    <property type="entry name" value="PHOTSYSPSAAB"/>
</dbReference>
<dbReference type="SUPFAM" id="SSF81558">
    <property type="entry name" value="Photosystem I subunits PsaA/PsaB"/>
    <property type="match status" value="1"/>
</dbReference>
<dbReference type="PROSITE" id="PS00419">
    <property type="entry name" value="PHOTOSYSTEM_I_PSAAB"/>
    <property type="match status" value="1"/>
</dbReference>
<gene>
    <name evidence="1" type="primary">psaB</name>
    <name type="ordered locus">SYNW2123</name>
</gene>
<name>PSAB_PARMW</name>
<organism>
    <name type="scientific">Parasynechococcus marenigrum (strain WH8102)</name>
    <dbReference type="NCBI Taxonomy" id="84588"/>
    <lineage>
        <taxon>Bacteria</taxon>
        <taxon>Bacillati</taxon>
        <taxon>Cyanobacteriota</taxon>
        <taxon>Cyanophyceae</taxon>
        <taxon>Synechococcales</taxon>
        <taxon>Prochlorococcaceae</taxon>
        <taxon>Parasynechococcus</taxon>
        <taxon>Parasynechococcus marenigrum</taxon>
    </lineage>
</organism>
<sequence length="737" mass="81810">MATKFPSFSQGLAQDPTTRRIWYGIATAHDFESHDGMTEERLYQKLFSTHFGHLAIIGLWVSGNLFHIAWQGNFEQWVADPLHVRPIAHAIWDPHFGQGAIDAFTQAGASSPVNIAFSGLYHWWYTIGMRTNAELYQGSIFMMILSAWALFAGWLHLQPKFRPSLAWFKNAESRLNHHLAVLFGFSSIAWTGHLVHVAIPEARGQHVGWDNFLNVLPHPAGLGPFFTGNWGVYAENPDSLNQAFGSADGAGTAILTFLGGFHPQSEALWLTDIAHHHLAIGCIFVIAGHMYRTNFGIGHSIKEILETHNPPKGTPGDLGAGHKGLYDTINNSLHFQLGLALASLGVVTSLVAQHMYSMPSYAFIAKDYTTQAALYTHHQYIAIALMCGAFAHGAIFFIRDYDPEANKDNVLARMLEHKEAIISHLSWVSLFLGFHTLGLYVHNDVVVSFGTPEKQILVEPVFAQFVQAASGKAMYGMDVLLSNASSSASLAAQNIPGDHYWLDAINGNTDVFLPIGPGDFLVHHAIALGLHTTTLILVKGALDARGSKLMPDKKDFGYSFPCDGPGRGGTCDISAWDAFYLAVFWALNTVGWVTFYWHWKHLAIWSGNVAQFNESSTYLMGWFRDYLWLNSSQLINGYNPFGSNNLAVWAWMFLFGHLVWATGFMFLISWRGYWQELIETIVWAHQRSPIANMMGWRDKPVALSIVQARVVGLAHFSVGYVLTYAAFLIASTSGKFG</sequence>